<proteinExistence type="evidence at protein level"/>
<feature type="chain" id="PRO_0000435472" description="Phosphoserine phosphatase" evidence="4">
    <location>
        <begin position="1"/>
        <end position="410"/>
    </location>
</feature>
<feature type="domain" description="ACT" evidence="2">
    <location>
        <begin position="13"/>
        <end position="91"/>
    </location>
</feature>
<feature type="active site" description="Nucleophile" evidence="1">
    <location>
        <position position="187"/>
    </location>
</feature>
<feature type="active site" description="Proton donor" evidence="1">
    <location>
        <position position="189"/>
    </location>
</feature>
<feature type="binding site" evidence="1">
    <location>
        <position position="187"/>
    </location>
    <ligand>
        <name>Mg(2+)</name>
        <dbReference type="ChEBI" id="CHEBI:18420"/>
    </ligand>
</feature>
<feature type="binding site" evidence="1">
    <location>
        <position position="189"/>
    </location>
    <ligand>
        <name>Mg(2+)</name>
        <dbReference type="ChEBI" id="CHEBI:18420"/>
    </ligand>
</feature>
<feature type="binding site" evidence="1">
    <location>
        <position position="196"/>
    </location>
    <ligand>
        <name>substrate</name>
    </ligand>
</feature>
<feature type="binding site" evidence="1">
    <location>
        <position position="232"/>
    </location>
    <ligand>
        <name>substrate</name>
    </ligand>
</feature>
<feature type="binding site" evidence="1">
    <location>
        <begin position="275"/>
        <end position="276"/>
    </location>
    <ligand>
        <name>substrate</name>
    </ligand>
</feature>
<feature type="binding site" evidence="1">
    <location>
        <position position="320"/>
    </location>
    <ligand>
        <name>substrate</name>
    </ligand>
</feature>
<feature type="binding site" evidence="1">
    <location>
        <position position="343"/>
    </location>
    <ligand>
        <name>Mg(2+)</name>
        <dbReference type="ChEBI" id="CHEBI:18420"/>
    </ligand>
</feature>
<feature type="binding site" evidence="1">
    <location>
        <position position="346"/>
    </location>
    <ligand>
        <name>substrate</name>
    </ligand>
</feature>
<comment type="function">
    <text evidence="3">Catalyzes the dephosphorylation of phosphoserine (P-Ser) in vitro. Also catalyzes the dephosphorylation of phosphothreonine (P-Thr) in vitro.</text>
</comment>
<comment type="catalytic activity">
    <reaction evidence="3">
        <text>O-phospho-L-serine + H2O = L-serine + phosphate</text>
        <dbReference type="Rhea" id="RHEA:21208"/>
        <dbReference type="ChEBI" id="CHEBI:15377"/>
        <dbReference type="ChEBI" id="CHEBI:33384"/>
        <dbReference type="ChEBI" id="CHEBI:43474"/>
        <dbReference type="ChEBI" id="CHEBI:57524"/>
        <dbReference type="EC" id="3.1.3.3"/>
    </reaction>
</comment>
<comment type="catalytic activity">
    <reaction evidence="3">
        <text>O-phospho-D-serine + H2O = D-serine + phosphate</text>
        <dbReference type="Rhea" id="RHEA:24873"/>
        <dbReference type="ChEBI" id="CHEBI:15377"/>
        <dbReference type="ChEBI" id="CHEBI:35247"/>
        <dbReference type="ChEBI" id="CHEBI:43474"/>
        <dbReference type="ChEBI" id="CHEBI:58680"/>
        <dbReference type="EC" id="3.1.3.3"/>
    </reaction>
</comment>
<comment type="cofactor">
    <cofactor evidence="3">
        <name>Mg(2+)</name>
        <dbReference type="ChEBI" id="CHEBI:18420"/>
    </cofactor>
</comment>
<comment type="pathway">
    <text evidence="4">Amino-acid biosynthesis; L-serine biosynthesis; L-serine from 3-phospho-D-glycerate: step 3/3.</text>
</comment>
<comment type="similarity">
    <text evidence="4">Belongs to the HAD-like hydrolase superfamily. SerB family.</text>
</comment>
<protein>
    <recommendedName>
        <fullName evidence="5">Phosphoserine phosphatase</fullName>
        <shortName evidence="1">PSP</shortName>
        <shortName evidence="1">PSPase</shortName>
        <ecNumber evidence="3">3.1.3.3</ecNumber>
    </recommendedName>
    <alternativeName>
        <fullName evidence="1">O-phosphoserine phosphohydrolase</fullName>
    </alternativeName>
</protein>
<sequence>MSASQTSDVPTLLVKIFGKDRPGITAGLFDTLAAYSVDVVDIEQVVTRGRIVLCALVTEPPRGLEGDLRATVHSWAESLKLQAEIISGIGDNRPRGFGRSLVTVLGHPLTAEATAAIAARITESGSNIDRIFRLAKYPVTAVEFAVSGVETEPLRTALATEAAALGVDIAVVAAGLHRRAQRLVVMDVDSTLIQDEVIELFAAHAGCEDEVAEVTAAAMRGELDFEQSLHARVALLAGLDASVVDKVRAEVRLTPGARTLIRTLKRLGYQVGVVSGGFTQVTDALQEQLGLDFAQANTLEIVDGRLTGRVTGEIVDRAGKARLLRRFAAAAGVPLSQTVAIGDGANDLDMLNAAGLGVAFNAKPVVREAAHTAVNVPFLDTVLYLLGITREEVEAADTLADDLGDGPGRP</sequence>
<accession>Q9S281</accession>
<evidence type="ECO:0000250" key="1">
    <source>
        <dbReference type="UniProtKB" id="Q58989"/>
    </source>
</evidence>
<evidence type="ECO:0000255" key="2">
    <source>
        <dbReference type="PROSITE-ProRule" id="PRU01007"/>
    </source>
</evidence>
<evidence type="ECO:0000269" key="3">
    <source>
    </source>
</evidence>
<evidence type="ECO:0000305" key="4"/>
<evidence type="ECO:0000305" key="5">
    <source>
    </source>
</evidence>
<evidence type="ECO:0000312" key="6">
    <source>
        <dbReference type="EMBL" id="CAB50876.1"/>
    </source>
</evidence>
<evidence type="ECO:0000312" key="7">
    <source>
        <dbReference type="Proteomes" id="UP000001973"/>
    </source>
</evidence>
<gene>
    <name evidence="6" type="ordered locus">SCO1808</name>
</gene>
<name>SERB_STRCO</name>
<organism evidence="7">
    <name type="scientific">Streptomyces coelicolor (strain ATCC BAA-471 / A3(2) / M145)</name>
    <dbReference type="NCBI Taxonomy" id="100226"/>
    <lineage>
        <taxon>Bacteria</taxon>
        <taxon>Bacillati</taxon>
        <taxon>Actinomycetota</taxon>
        <taxon>Actinomycetes</taxon>
        <taxon>Kitasatosporales</taxon>
        <taxon>Streptomycetaceae</taxon>
        <taxon>Streptomyces</taxon>
        <taxon>Streptomyces albidoflavus group</taxon>
    </lineage>
</organism>
<reference evidence="7" key="1">
    <citation type="journal article" date="2002" name="Nature">
        <title>Complete genome sequence of the model actinomycete Streptomyces coelicolor A3(2).</title>
        <authorList>
            <person name="Bentley S.D."/>
            <person name="Chater K.F."/>
            <person name="Cerdeno-Tarraga A.-M."/>
            <person name="Challis G.L."/>
            <person name="Thomson N.R."/>
            <person name="James K.D."/>
            <person name="Harris D.E."/>
            <person name="Quail M.A."/>
            <person name="Kieser H."/>
            <person name="Harper D."/>
            <person name="Bateman A."/>
            <person name="Brown S."/>
            <person name="Chandra G."/>
            <person name="Chen C.W."/>
            <person name="Collins M."/>
            <person name="Cronin A."/>
            <person name="Fraser A."/>
            <person name="Goble A."/>
            <person name="Hidalgo J."/>
            <person name="Hornsby T."/>
            <person name="Howarth S."/>
            <person name="Huang C.-H."/>
            <person name="Kieser T."/>
            <person name="Larke L."/>
            <person name="Murphy L.D."/>
            <person name="Oliver K."/>
            <person name="O'Neil S."/>
            <person name="Rabbinowitsch E."/>
            <person name="Rajandream M.A."/>
            <person name="Rutherford K.M."/>
            <person name="Rutter S."/>
            <person name="Seeger K."/>
            <person name="Saunders D."/>
            <person name="Sharp S."/>
            <person name="Squares R."/>
            <person name="Squares S."/>
            <person name="Taylor K."/>
            <person name="Warren T."/>
            <person name="Wietzorrek A."/>
            <person name="Woodward J.R."/>
            <person name="Barrell B.G."/>
            <person name="Parkhill J."/>
            <person name="Hopwood D.A."/>
        </authorList>
    </citation>
    <scope>NUCLEOTIDE SEQUENCE [LARGE SCALE GENOMIC DNA]</scope>
    <source>
        <strain evidence="7">ATCC BAA-471 / A3(2) / M145</strain>
    </source>
</reference>
<reference evidence="4" key="2">
    <citation type="journal article" date="2015" name="Proc. Natl. Acad. Sci. U.S.A.">
        <title>Panoramic view of a superfamily of phosphatases through substrate profiling.</title>
        <authorList>
            <person name="Huang H."/>
            <person name="Pandya C."/>
            <person name="Liu C."/>
            <person name="Al-Obaidi N.F."/>
            <person name="Wang M."/>
            <person name="Zheng L."/>
            <person name="Toews Keating S."/>
            <person name="Aono M."/>
            <person name="Love J.D."/>
            <person name="Evans B."/>
            <person name="Seidel R.D."/>
            <person name="Hillerich B.S."/>
            <person name="Garforth S.J."/>
            <person name="Almo S.C."/>
            <person name="Mariano P.S."/>
            <person name="Dunaway-Mariano D."/>
            <person name="Allen K.N."/>
            <person name="Farelli J.D."/>
        </authorList>
    </citation>
    <scope>FUNCTION</scope>
    <scope>CATALYTIC ACTIVITY</scope>
    <scope>COFACTOR</scope>
</reference>
<dbReference type="EC" id="3.1.3.3" evidence="3"/>
<dbReference type="EMBL" id="AL939110">
    <property type="protein sequence ID" value="CAB50876.1"/>
    <property type="molecule type" value="Genomic_DNA"/>
</dbReference>
<dbReference type="PIR" id="T36772">
    <property type="entry name" value="T36772"/>
</dbReference>
<dbReference type="RefSeq" id="NP_626077.1">
    <property type="nucleotide sequence ID" value="NC_003888.3"/>
</dbReference>
<dbReference type="SMR" id="Q9S281"/>
<dbReference type="FunCoup" id="Q9S281">
    <property type="interactions" value="194"/>
</dbReference>
<dbReference type="STRING" id="100226.gene:17759405"/>
<dbReference type="PaxDb" id="100226-SCO1808"/>
<dbReference type="KEGG" id="sco:SCO1808"/>
<dbReference type="PATRIC" id="fig|100226.15.peg.1829"/>
<dbReference type="eggNOG" id="COG0560">
    <property type="taxonomic scope" value="Bacteria"/>
</dbReference>
<dbReference type="eggNOG" id="COG3830">
    <property type="taxonomic scope" value="Bacteria"/>
</dbReference>
<dbReference type="HOGENOM" id="CLU_036368_1_0_11"/>
<dbReference type="InParanoid" id="Q9S281"/>
<dbReference type="OrthoDB" id="9792539at2"/>
<dbReference type="PhylomeDB" id="Q9S281"/>
<dbReference type="UniPathway" id="UPA00135">
    <property type="reaction ID" value="UER00198"/>
</dbReference>
<dbReference type="Proteomes" id="UP000001973">
    <property type="component" value="Chromosome"/>
</dbReference>
<dbReference type="GO" id="GO:0005737">
    <property type="term" value="C:cytoplasm"/>
    <property type="evidence" value="ECO:0000318"/>
    <property type="project" value="GO_Central"/>
</dbReference>
<dbReference type="GO" id="GO:0036424">
    <property type="term" value="F:L-phosphoserine phosphatase activity"/>
    <property type="evidence" value="ECO:0000318"/>
    <property type="project" value="GO_Central"/>
</dbReference>
<dbReference type="GO" id="GO:0000287">
    <property type="term" value="F:magnesium ion binding"/>
    <property type="evidence" value="ECO:0000318"/>
    <property type="project" value="GO_Central"/>
</dbReference>
<dbReference type="GO" id="GO:0006564">
    <property type="term" value="P:L-serine biosynthetic process"/>
    <property type="evidence" value="ECO:0000318"/>
    <property type="project" value="GO_Central"/>
</dbReference>
<dbReference type="CDD" id="cd04870">
    <property type="entry name" value="ACT_PSP_1"/>
    <property type="match status" value="1"/>
</dbReference>
<dbReference type="CDD" id="cd07500">
    <property type="entry name" value="HAD_PSP"/>
    <property type="match status" value="1"/>
</dbReference>
<dbReference type="FunFam" id="3.30.70.260:FF:000043">
    <property type="entry name" value="Phosphoserine phosphatase SerB"/>
    <property type="match status" value="1"/>
</dbReference>
<dbReference type="FunFam" id="3.30.70.260:FF:000047">
    <property type="entry name" value="Phosphoserine phosphatase SerB"/>
    <property type="match status" value="1"/>
</dbReference>
<dbReference type="FunFam" id="3.40.50.1000:FF:000041">
    <property type="entry name" value="Phosphoserine phosphatase SerB"/>
    <property type="match status" value="1"/>
</dbReference>
<dbReference type="Gene3D" id="3.30.70.260">
    <property type="match status" value="2"/>
</dbReference>
<dbReference type="Gene3D" id="3.40.50.1000">
    <property type="entry name" value="HAD superfamily/HAD-like"/>
    <property type="match status" value="1"/>
</dbReference>
<dbReference type="InterPro" id="IPR045865">
    <property type="entry name" value="ACT-like_dom_sf"/>
</dbReference>
<dbReference type="InterPro" id="IPR002912">
    <property type="entry name" value="ACT_dom"/>
</dbReference>
<dbReference type="InterPro" id="IPR050582">
    <property type="entry name" value="HAD-like_SerB"/>
</dbReference>
<dbReference type="InterPro" id="IPR036412">
    <property type="entry name" value="HAD-like_sf"/>
</dbReference>
<dbReference type="InterPro" id="IPR023214">
    <property type="entry name" value="HAD_sf"/>
</dbReference>
<dbReference type="InterPro" id="IPR004469">
    <property type="entry name" value="PSP"/>
</dbReference>
<dbReference type="InterPro" id="IPR049148">
    <property type="entry name" value="PSP_ACT"/>
</dbReference>
<dbReference type="NCBIfam" id="TIGR01488">
    <property type="entry name" value="HAD-SF-IB"/>
    <property type="match status" value="1"/>
</dbReference>
<dbReference type="NCBIfam" id="TIGR00338">
    <property type="entry name" value="serB"/>
    <property type="match status" value="1"/>
</dbReference>
<dbReference type="PANTHER" id="PTHR43344">
    <property type="entry name" value="PHOSPHOSERINE PHOSPHATASE"/>
    <property type="match status" value="1"/>
</dbReference>
<dbReference type="PANTHER" id="PTHR43344:SF2">
    <property type="entry name" value="PHOSPHOSERINE PHOSPHATASE"/>
    <property type="match status" value="1"/>
</dbReference>
<dbReference type="Pfam" id="PF13740">
    <property type="entry name" value="ACT_6"/>
    <property type="match status" value="1"/>
</dbReference>
<dbReference type="Pfam" id="PF21086">
    <property type="entry name" value="ACT_PSP_2"/>
    <property type="match status" value="1"/>
</dbReference>
<dbReference type="Pfam" id="PF12710">
    <property type="entry name" value="HAD"/>
    <property type="match status" value="1"/>
</dbReference>
<dbReference type="SFLD" id="SFLDG01136">
    <property type="entry name" value="C1.6:_Phosphoserine_Phosphatas"/>
    <property type="match status" value="1"/>
</dbReference>
<dbReference type="SFLD" id="SFLDF00029">
    <property type="entry name" value="phosphoserine_phosphatase"/>
    <property type="match status" value="1"/>
</dbReference>
<dbReference type="SUPFAM" id="SSF55021">
    <property type="entry name" value="ACT-like"/>
    <property type="match status" value="1"/>
</dbReference>
<dbReference type="SUPFAM" id="SSF56784">
    <property type="entry name" value="HAD-like"/>
    <property type="match status" value="1"/>
</dbReference>
<dbReference type="PROSITE" id="PS51671">
    <property type="entry name" value="ACT"/>
    <property type="match status" value="1"/>
</dbReference>
<keyword id="KW-0028">Amino-acid biosynthesis</keyword>
<keyword id="KW-0378">Hydrolase</keyword>
<keyword id="KW-0460">Magnesium</keyword>
<keyword id="KW-0479">Metal-binding</keyword>
<keyword id="KW-1185">Reference proteome</keyword>
<keyword id="KW-0718">Serine biosynthesis</keyword>